<dbReference type="EC" id="4.3.2.1" evidence="1"/>
<dbReference type="EMBL" id="CU928164">
    <property type="protein sequence ID" value="CAR19148.1"/>
    <property type="molecule type" value="Genomic_DNA"/>
</dbReference>
<dbReference type="RefSeq" id="WP_001230090.1">
    <property type="nucleotide sequence ID" value="NC_011750.1"/>
</dbReference>
<dbReference type="RefSeq" id="YP_002408959.1">
    <property type="nucleotide sequence ID" value="NC_011750.1"/>
</dbReference>
<dbReference type="SMR" id="B7NU40"/>
<dbReference type="STRING" id="585057.ECIAI39_3029"/>
<dbReference type="KEGG" id="ect:ECIAI39_3029"/>
<dbReference type="PATRIC" id="fig|585057.6.peg.3141"/>
<dbReference type="HOGENOM" id="CLU_027272_2_3_6"/>
<dbReference type="UniPathway" id="UPA00068">
    <property type="reaction ID" value="UER00114"/>
</dbReference>
<dbReference type="Proteomes" id="UP000000749">
    <property type="component" value="Chromosome"/>
</dbReference>
<dbReference type="GO" id="GO:0005829">
    <property type="term" value="C:cytosol"/>
    <property type="evidence" value="ECO:0007669"/>
    <property type="project" value="TreeGrafter"/>
</dbReference>
<dbReference type="GO" id="GO:0004056">
    <property type="term" value="F:argininosuccinate lyase activity"/>
    <property type="evidence" value="ECO:0007669"/>
    <property type="project" value="UniProtKB-UniRule"/>
</dbReference>
<dbReference type="GO" id="GO:0042450">
    <property type="term" value="P:arginine biosynthetic process via ornithine"/>
    <property type="evidence" value="ECO:0007669"/>
    <property type="project" value="InterPro"/>
</dbReference>
<dbReference type="GO" id="GO:0006526">
    <property type="term" value="P:L-arginine biosynthetic process"/>
    <property type="evidence" value="ECO:0007669"/>
    <property type="project" value="UniProtKB-UniRule"/>
</dbReference>
<dbReference type="CDD" id="cd01359">
    <property type="entry name" value="Argininosuccinate_lyase"/>
    <property type="match status" value="1"/>
</dbReference>
<dbReference type="FunFam" id="1.10.275.10:FF:000004">
    <property type="entry name" value="Argininosuccinate lyase"/>
    <property type="match status" value="1"/>
</dbReference>
<dbReference type="FunFam" id="1.10.40.30:FF:000001">
    <property type="entry name" value="Argininosuccinate lyase"/>
    <property type="match status" value="1"/>
</dbReference>
<dbReference type="FunFam" id="1.20.200.10:FF:000006">
    <property type="entry name" value="Argininosuccinate lyase"/>
    <property type="match status" value="1"/>
</dbReference>
<dbReference type="Gene3D" id="1.10.40.30">
    <property type="entry name" value="Fumarase/aspartase (C-terminal domain)"/>
    <property type="match status" value="1"/>
</dbReference>
<dbReference type="Gene3D" id="1.20.200.10">
    <property type="entry name" value="Fumarase/aspartase (Central domain)"/>
    <property type="match status" value="1"/>
</dbReference>
<dbReference type="Gene3D" id="1.10.275.10">
    <property type="entry name" value="Fumarase/aspartase (N-terminal domain)"/>
    <property type="match status" value="1"/>
</dbReference>
<dbReference type="HAMAP" id="MF_00006">
    <property type="entry name" value="Arg_succ_lyase"/>
    <property type="match status" value="1"/>
</dbReference>
<dbReference type="InterPro" id="IPR029419">
    <property type="entry name" value="Arg_succ_lyase_C"/>
</dbReference>
<dbReference type="InterPro" id="IPR009049">
    <property type="entry name" value="Argininosuccinate_lyase"/>
</dbReference>
<dbReference type="InterPro" id="IPR024083">
    <property type="entry name" value="Fumarase/histidase_N"/>
</dbReference>
<dbReference type="InterPro" id="IPR020557">
    <property type="entry name" value="Fumarate_lyase_CS"/>
</dbReference>
<dbReference type="InterPro" id="IPR000362">
    <property type="entry name" value="Fumarate_lyase_fam"/>
</dbReference>
<dbReference type="InterPro" id="IPR022761">
    <property type="entry name" value="Fumarate_lyase_N"/>
</dbReference>
<dbReference type="InterPro" id="IPR008948">
    <property type="entry name" value="L-Aspartase-like"/>
</dbReference>
<dbReference type="NCBIfam" id="TIGR00838">
    <property type="entry name" value="argH"/>
    <property type="match status" value="1"/>
</dbReference>
<dbReference type="NCBIfam" id="NF008964">
    <property type="entry name" value="PRK12308.1"/>
    <property type="match status" value="1"/>
</dbReference>
<dbReference type="PANTHER" id="PTHR43814">
    <property type="entry name" value="ARGININOSUCCINATE LYASE"/>
    <property type="match status" value="1"/>
</dbReference>
<dbReference type="PANTHER" id="PTHR43814:SF1">
    <property type="entry name" value="ARGININOSUCCINATE LYASE"/>
    <property type="match status" value="1"/>
</dbReference>
<dbReference type="Pfam" id="PF14698">
    <property type="entry name" value="ASL_C2"/>
    <property type="match status" value="1"/>
</dbReference>
<dbReference type="Pfam" id="PF00206">
    <property type="entry name" value="Lyase_1"/>
    <property type="match status" value="1"/>
</dbReference>
<dbReference type="PRINTS" id="PR00145">
    <property type="entry name" value="ARGSUCLYASE"/>
</dbReference>
<dbReference type="PRINTS" id="PR00149">
    <property type="entry name" value="FUMRATELYASE"/>
</dbReference>
<dbReference type="SUPFAM" id="SSF48557">
    <property type="entry name" value="L-aspartase-like"/>
    <property type="match status" value="1"/>
</dbReference>
<dbReference type="PROSITE" id="PS00163">
    <property type="entry name" value="FUMARATE_LYASES"/>
    <property type="match status" value="1"/>
</dbReference>
<sequence length="457" mass="50260">MALWGGRFTQAADQRFKQFNDSLRFDYRLAEQDIVGSVAWSKALVTVGVLTAEEQAQLEEALNVLLEDVRARPQQILESDAEDIHSWVEGKLIDKVGQLGKKLHTGRSRNDQVATDLKLWCKDTVSELLTANRQLQSALVETAQNNQDAVMPGYTHLQRAQPVTFAHWCLAYVEMLARDESRLQDALKRLDVSPLGCGALAGTAYEIDREQLAGWLGFASATRNSLDSVSDRDHVLELLSAAAIGMVHLSRFAEDLIFFNTGEAGFVELSDRVTSGSSLMPQKKNPDALELIRGKCGRVQGALTGMMMTLKGLPLAYNKDMQEDKEGLFDALDTWLDCLHMAALVLDGIQVKRPRCQEAAQQGYANATELADYLVAKGVPFREAHHIVGEAVVEAIRQGKPLEDLPLSELQKFSQVIGEDVYPILSLQSCLDKRAAKGGVSPQQVAQAIAFAQARLG</sequence>
<reference key="1">
    <citation type="journal article" date="2009" name="PLoS Genet.">
        <title>Organised genome dynamics in the Escherichia coli species results in highly diverse adaptive paths.</title>
        <authorList>
            <person name="Touchon M."/>
            <person name="Hoede C."/>
            <person name="Tenaillon O."/>
            <person name="Barbe V."/>
            <person name="Baeriswyl S."/>
            <person name="Bidet P."/>
            <person name="Bingen E."/>
            <person name="Bonacorsi S."/>
            <person name="Bouchier C."/>
            <person name="Bouvet O."/>
            <person name="Calteau A."/>
            <person name="Chiapello H."/>
            <person name="Clermont O."/>
            <person name="Cruveiller S."/>
            <person name="Danchin A."/>
            <person name="Diard M."/>
            <person name="Dossat C."/>
            <person name="Karoui M.E."/>
            <person name="Frapy E."/>
            <person name="Garry L."/>
            <person name="Ghigo J.M."/>
            <person name="Gilles A.M."/>
            <person name="Johnson J."/>
            <person name="Le Bouguenec C."/>
            <person name="Lescat M."/>
            <person name="Mangenot S."/>
            <person name="Martinez-Jehanne V."/>
            <person name="Matic I."/>
            <person name="Nassif X."/>
            <person name="Oztas S."/>
            <person name="Petit M.A."/>
            <person name="Pichon C."/>
            <person name="Rouy Z."/>
            <person name="Ruf C.S."/>
            <person name="Schneider D."/>
            <person name="Tourret J."/>
            <person name="Vacherie B."/>
            <person name="Vallenet D."/>
            <person name="Medigue C."/>
            <person name="Rocha E.P.C."/>
            <person name="Denamur E."/>
        </authorList>
    </citation>
    <scope>NUCLEOTIDE SEQUENCE [LARGE SCALE GENOMIC DNA]</scope>
    <source>
        <strain>IAI39 / ExPEC</strain>
    </source>
</reference>
<keyword id="KW-0028">Amino-acid biosynthesis</keyword>
<keyword id="KW-0055">Arginine biosynthesis</keyword>
<keyword id="KW-0963">Cytoplasm</keyword>
<keyword id="KW-0456">Lyase</keyword>
<organism>
    <name type="scientific">Escherichia coli O7:K1 (strain IAI39 / ExPEC)</name>
    <dbReference type="NCBI Taxonomy" id="585057"/>
    <lineage>
        <taxon>Bacteria</taxon>
        <taxon>Pseudomonadati</taxon>
        <taxon>Pseudomonadota</taxon>
        <taxon>Gammaproteobacteria</taxon>
        <taxon>Enterobacterales</taxon>
        <taxon>Enterobacteriaceae</taxon>
        <taxon>Escherichia</taxon>
    </lineage>
</organism>
<accession>B7NU40</accession>
<evidence type="ECO:0000255" key="1">
    <source>
        <dbReference type="HAMAP-Rule" id="MF_00006"/>
    </source>
</evidence>
<proteinExistence type="inferred from homology"/>
<feature type="chain" id="PRO_1000116205" description="Argininosuccinate lyase">
    <location>
        <begin position="1"/>
        <end position="457"/>
    </location>
</feature>
<gene>
    <name evidence="1" type="primary">argH</name>
    <name type="ordered locus">ECIAI39_3029</name>
</gene>
<name>ARLY_ECO7I</name>
<comment type="catalytic activity">
    <reaction evidence="1">
        <text>2-(N(omega)-L-arginino)succinate = fumarate + L-arginine</text>
        <dbReference type="Rhea" id="RHEA:24020"/>
        <dbReference type="ChEBI" id="CHEBI:29806"/>
        <dbReference type="ChEBI" id="CHEBI:32682"/>
        <dbReference type="ChEBI" id="CHEBI:57472"/>
        <dbReference type="EC" id="4.3.2.1"/>
    </reaction>
</comment>
<comment type="pathway">
    <text evidence="1">Amino-acid biosynthesis; L-arginine biosynthesis; L-arginine from L-ornithine and carbamoyl phosphate: step 3/3.</text>
</comment>
<comment type="subcellular location">
    <subcellularLocation>
        <location evidence="1">Cytoplasm</location>
    </subcellularLocation>
</comment>
<comment type="similarity">
    <text evidence="1">Belongs to the lyase 1 family. Argininosuccinate lyase subfamily.</text>
</comment>
<protein>
    <recommendedName>
        <fullName evidence="1">Argininosuccinate lyase</fullName>
        <shortName evidence="1">ASAL</shortName>
        <ecNumber evidence="1">4.3.2.1</ecNumber>
    </recommendedName>
    <alternativeName>
        <fullName evidence="1">Arginosuccinase</fullName>
    </alternativeName>
</protein>